<dbReference type="EMBL" id="CP000572">
    <property type="protein sequence ID" value="ABN92475.1"/>
    <property type="molecule type" value="Genomic_DNA"/>
</dbReference>
<dbReference type="RefSeq" id="WP_004189653.1">
    <property type="nucleotide sequence ID" value="NC_009076.1"/>
</dbReference>
<dbReference type="SMR" id="A3NXZ6"/>
<dbReference type="KEGG" id="bpl:BURPS1106A_2973"/>
<dbReference type="HOGENOM" id="CLU_098660_1_0_4"/>
<dbReference type="Proteomes" id="UP000006738">
    <property type="component" value="Chromosome I"/>
</dbReference>
<dbReference type="GO" id="GO:0005886">
    <property type="term" value="C:plasma membrane"/>
    <property type="evidence" value="ECO:0007669"/>
    <property type="project" value="UniProtKB-SubCell"/>
</dbReference>
<dbReference type="GO" id="GO:0009055">
    <property type="term" value="F:electron transfer activity"/>
    <property type="evidence" value="ECO:0007669"/>
    <property type="project" value="UniProtKB-UniRule"/>
</dbReference>
<dbReference type="GO" id="GO:0015035">
    <property type="term" value="F:protein-disulfide reductase activity"/>
    <property type="evidence" value="ECO:0007669"/>
    <property type="project" value="UniProtKB-UniRule"/>
</dbReference>
<dbReference type="GO" id="GO:0006457">
    <property type="term" value="P:protein folding"/>
    <property type="evidence" value="ECO:0007669"/>
    <property type="project" value="InterPro"/>
</dbReference>
<dbReference type="Gene3D" id="1.20.1550.10">
    <property type="entry name" value="DsbB-like"/>
    <property type="match status" value="1"/>
</dbReference>
<dbReference type="HAMAP" id="MF_00286">
    <property type="entry name" value="DsbB"/>
    <property type="match status" value="1"/>
</dbReference>
<dbReference type="InterPro" id="IPR003752">
    <property type="entry name" value="DiS_bond_form_DsbB/BdbC"/>
</dbReference>
<dbReference type="InterPro" id="IPR022920">
    <property type="entry name" value="Disulphide_bond_form_DsbB"/>
</dbReference>
<dbReference type="InterPro" id="IPR050183">
    <property type="entry name" value="DsbB"/>
</dbReference>
<dbReference type="InterPro" id="IPR023380">
    <property type="entry name" value="DsbB-like_sf"/>
</dbReference>
<dbReference type="NCBIfam" id="NF002552">
    <property type="entry name" value="PRK02110.1"/>
    <property type="match status" value="1"/>
</dbReference>
<dbReference type="PANTHER" id="PTHR36570">
    <property type="entry name" value="DISULFIDE BOND FORMATION PROTEIN B"/>
    <property type="match status" value="1"/>
</dbReference>
<dbReference type="PANTHER" id="PTHR36570:SF3">
    <property type="entry name" value="DISULFIDE BOND FORMATION PROTEIN B"/>
    <property type="match status" value="1"/>
</dbReference>
<dbReference type="Pfam" id="PF02600">
    <property type="entry name" value="DsbB"/>
    <property type="match status" value="1"/>
</dbReference>
<dbReference type="SUPFAM" id="SSF158442">
    <property type="entry name" value="DsbB-like"/>
    <property type="match status" value="1"/>
</dbReference>
<organism>
    <name type="scientific">Burkholderia pseudomallei (strain 1106a)</name>
    <dbReference type="NCBI Taxonomy" id="357348"/>
    <lineage>
        <taxon>Bacteria</taxon>
        <taxon>Pseudomonadati</taxon>
        <taxon>Pseudomonadota</taxon>
        <taxon>Betaproteobacteria</taxon>
        <taxon>Burkholderiales</taxon>
        <taxon>Burkholderiaceae</taxon>
        <taxon>Burkholderia</taxon>
        <taxon>pseudomallei group</taxon>
    </lineage>
</organism>
<proteinExistence type="inferred from homology"/>
<evidence type="ECO:0000255" key="1">
    <source>
        <dbReference type="HAMAP-Rule" id="MF_00286"/>
    </source>
</evidence>
<feature type="chain" id="PRO_0000298347" description="Disulfide bond formation protein B">
    <location>
        <begin position="1"/>
        <end position="169"/>
    </location>
</feature>
<feature type="topological domain" description="Cytoplasmic" evidence="1">
    <location>
        <begin position="1"/>
        <end position="14"/>
    </location>
</feature>
<feature type="transmembrane region" description="Helical" evidence="1">
    <location>
        <begin position="15"/>
        <end position="31"/>
    </location>
</feature>
<feature type="topological domain" description="Periplasmic" evidence="1">
    <location>
        <begin position="32"/>
        <end position="49"/>
    </location>
</feature>
<feature type="transmembrane region" description="Helical" evidence="1">
    <location>
        <begin position="50"/>
        <end position="64"/>
    </location>
</feature>
<feature type="topological domain" description="Cytoplasmic" evidence="1">
    <location>
        <begin position="65"/>
        <end position="71"/>
    </location>
</feature>
<feature type="transmembrane region" description="Helical" evidence="1">
    <location>
        <begin position="72"/>
        <end position="89"/>
    </location>
</feature>
<feature type="topological domain" description="Periplasmic" evidence="1">
    <location>
        <begin position="90"/>
        <end position="144"/>
    </location>
</feature>
<feature type="transmembrane region" description="Helical" evidence="1">
    <location>
        <begin position="145"/>
        <end position="163"/>
    </location>
</feature>
<feature type="topological domain" description="Cytoplasmic" evidence="1">
    <location>
        <begin position="164"/>
        <end position="169"/>
    </location>
</feature>
<feature type="disulfide bond" description="Redox-active" evidence="1">
    <location>
        <begin position="41"/>
        <end position="44"/>
    </location>
</feature>
<feature type="disulfide bond" description="Redox-active" evidence="1">
    <location>
        <begin position="102"/>
        <end position="130"/>
    </location>
</feature>
<comment type="function">
    <text evidence="1">Required for disulfide bond formation in some periplasmic proteins. Acts by oxidizing the DsbA protein.</text>
</comment>
<comment type="subcellular location">
    <subcellularLocation>
        <location evidence="1">Cell inner membrane</location>
        <topology evidence="1">Multi-pass membrane protein</topology>
    </subcellularLocation>
</comment>
<comment type="similarity">
    <text evidence="1">Belongs to the DsbB family.</text>
</comment>
<protein>
    <recommendedName>
        <fullName evidence="1">Disulfide bond formation protein B</fullName>
    </recommendedName>
    <alternativeName>
        <fullName evidence="1">Disulfide oxidoreductase</fullName>
    </alternativeName>
</protein>
<keyword id="KW-0997">Cell inner membrane</keyword>
<keyword id="KW-1003">Cell membrane</keyword>
<keyword id="KW-0143">Chaperone</keyword>
<keyword id="KW-1015">Disulfide bond</keyword>
<keyword id="KW-0249">Electron transport</keyword>
<keyword id="KW-0472">Membrane</keyword>
<keyword id="KW-0560">Oxidoreductase</keyword>
<keyword id="KW-0676">Redox-active center</keyword>
<keyword id="KW-0812">Transmembrane</keyword>
<keyword id="KW-1133">Transmembrane helix</keyword>
<keyword id="KW-0813">Transport</keyword>
<reference key="1">
    <citation type="journal article" date="2010" name="Genome Biol. Evol.">
        <title>Continuing evolution of Burkholderia mallei through genome reduction and large-scale rearrangements.</title>
        <authorList>
            <person name="Losada L."/>
            <person name="Ronning C.M."/>
            <person name="DeShazer D."/>
            <person name="Woods D."/>
            <person name="Fedorova N."/>
            <person name="Kim H.S."/>
            <person name="Shabalina S.A."/>
            <person name="Pearson T.R."/>
            <person name="Brinkac L."/>
            <person name="Tan P."/>
            <person name="Nandi T."/>
            <person name="Crabtree J."/>
            <person name="Badger J."/>
            <person name="Beckstrom-Sternberg S."/>
            <person name="Saqib M."/>
            <person name="Schutzer S.E."/>
            <person name="Keim P."/>
            <person name="Nierman W.C."/>
        </authorList>
    </citation>
    <scope>NUCLEOTIDE SEQUENCE [LARGE SCALE GENOMIC DNA]</scope>
    <source>
        <strain>1106a</strain>
    </source>
</reference>
<gene>
    <name evidence="1" type="primary">dsbB</name>
    <name type="ordered locus">BURPS1106A_2973</name>
</gene>
<accession>A3NXZ6</accession>
<name>DSBB_BURP0</name>
<sequence length="169" mass="18114">MNNLTLSLRRERRLLVLLALVCLALLAGALYLQYVKNEDPCPLCIIQRYFFVLIAVFAFIGAGMASGAGVAVTEALIVLSAAAGVGTAARHLYVQLNPGFSCGFDALQPVVDSLPPARWLPGVFKVAGLCETVYPPIFGILLPGWALIAFVLIAVPVAVSLLRHRGRLR</sequence>